<comment type="function">
    <text evidence="1">Participates actively in the response to hyperosmotic and heat shock by preventing the aggregation of stress-denatured proteins, in association with DnaK and GrpE. It is the nucleotide exchange factor for DnaK and may function as a thermosensor. Unfolded proteins bind initially to DnaJ; upon interaction with the DnaJ-bound protein, DnaK hydrolyzes its bound ATP, resulting in the formation of a stable complex. GrpE releases ADP from DnaK; ATP binding to DnaK triggers the release of the substrate protein, thus completing the reaction cycle. Several rounds of ATP-dependent interactions between DnaJ, DnaK and GrpE are required for fully efficient folding.</text>
</comment>
<comment type="subunit">
    <text evidence="1">Homodimer.</text>
</comment>
<comment type="subcellular location">
    <subcellularLocation>
        <location evidence="1">Cytoplasm</location>
    </subcellularLocation>
</comment>
<comment type="similarity">
    <text evidence="1">Belongs to the GrpE family.</text>
</comment>
<sequence length="178" mass="19963">MADELSEKSVEGTEEDGESAPAEGTTEGVPVDEVAKLRQELEDVKRIADERLEQLLRCRAELDNVIKRNSREREELARFASEAIIKKLLVFLDSLEQAAKHDEGAKALYDQLLDIMRSEGLEPIDAVGKKFDPFVHEAMMQVESQEAEDGIVVQEFQKGYTLHSRVIRTSKVAVAKHG</sequence>
<evidence type="ECO:0000255" key="1">
    <source>
        <dbReference type="HAMAP-Rule" id="MF_01151"/>
    </source>
</evidence>
<evidence type="ECO:0000256" key="2">
    <source>
        <dbReference type="SAM" id="MobiDB-lite"/>
    </source>
</evidence>
<protein>
    <recommendedName>
        <fullName evidence="1">Protein GrpE</fullName>
    </recommendedName>
    <alternativeName>
        <fullName evidence="1">HSP-70 cofactor</fullName>
    </alternativeName>
</protein>
<keyword id="KW-0143">Chaperone</keyword>
<keyword id="KW-0963">Cytoplasm</keyword>
<keyword id="KW-1185">Reference proteome</keyword>
<keyword id="KW-0346">Stress response</keyword>
<name>GRPE_METTP</name>
<proteinExistence type="inferred from homology"/>
<feature type="chain" id="PRO_1000073065" description="Protein GrpE">
    <location>
        <begin position="1"/>
        <end position="178"/>
    </location>
</feature>
<feature type="region of interest" description="Disordered" evidence="2">
    <location>
        <begin position="1"/>
        <end position="32"/>
    </location>
</feature>
<feature type="compositionally biased region" description="Basic and acidic residues" evidence="2">
    <location>
        <begin position="1"/>
        <end position="11"/>
    </location>
</feature>
<accession>A0B748</accession>
<gene>
    <name evidence="1" type="primary">grpE</name>
    <name type="ordered locus">Mthe_0732</name>
</gene>
<dbReference type="EMBL" id="CP000477">
    <property type="protein sequence ID" value="ABK14522.1"/>
    <property type="molecule type" value="Genomic_DNA"/>
</dbReference>
<dbReference type="RefSeq" id="WP_011695918.1">
    <property type="nucleotide sequence ID" value="NC_008553.1"/>
</dbReference>
<dbReference type="SMR" id="A0B748"/>
<dbReference type="STRING" id="349307.Mthe_0732"/>
<dbReference type="GeneID" id="4461883"/>
<dbReference type="KEGG" id="mtp:Mthe_0732"/>
<dbReference type="HOGENOM" id="CLU_057217_5_2_2"/>
<dbReference type="OrthoDB" id="372230at2157"/>
<dbReference type="Proteomes" id="UP000000674">
    <property type="component" value="Chromosome"/>
</dbReference>
<dbReference type="GO" id="GO:0005737">
    <property type="term" value="C:cytoplasm"/>
    <property type="evidence" value="ECO:0007669"/>
    <property type="project" value="UniProtKB-SubCell"/>
</dbReference>
<dbReference type="GO" id="GO:0000774">
    <property type="term" value="F:adenyl-nucleotide exchange factor activity"/>
    <property type="evidence" value="ECO:0007669"/>
    <property type="project" value="InterPro"/>
</dbReference>
<dbReference type="GO" id="GO:0042803">
    <property type="term" value="F:protein homodimerization activity"/>
    <property type="evidence" value="ECO:0007669"/>
    <property type="project" value="InterPro"/>
</dbReference>
<dbReference type="GO" id="GO:0051087">
    <property type="term" value="F:protein-folding chaperone binding"/>
    <property type="evidence" value="ECO:0007669"/>
    <property type="project" value="InterPro"/>
</dbReference>
<dbReference type="GO" id="GO:0051082">
    <property type="term" value="F:unfolded protein binding"/>
    <property type="evidence" value="ECO:0007669"/>
    <property type="project" value="TreeGrafter"/>
</dbReference>
<dbReference type="GO" id="GO:0006457">
    <property type="term" value="P:protein folding"/>
    <property type="evidence" value="ECO:0007669"/>
    <property type="project" value="InterPro"/>
</dbReference>
<dbReference type="CDD" id="cd00446">
    <property type="entry name" value="GrpE"/>
    <property type="match status" value="1"/>
</dbReference>
<dbReference type="FunFam" id="2.30.22.10:FF:000001">
    <property type="entry name" value="Protein GrpE"/>
    <property type="match status" value="1"/>
</dbReference>
<dbReference type="Gene3D" id="3.90.20.20">
    <property type="match status" value="1"/>
</dbReference>
<dbReference type="Gene3D" id="2.30.22.10">
    <property type="entry name" value="Head domain of nucleotide exchange factor GrpE"/>
    <property type="match status" value="1"/>
</dbReference>
<dbReference type="HAMAP" id="MF_01151">
    <property type="entry name" value="GrpE"/>
    <property type="match status" value="1"/>
</dbReference>
<dbReference type="InterPro" id="IPR000740">
    <property type="entry name" value="GrpE"/>
</dbReference>
<dbReference type="InterPro" id="IPR013805">
    <property type="entry name" value="GrpE_coiled_coil"/>
</dbReference>
<dbReference type="InterPro" id="IPR009012">
    <property type="entry name" value="GrpE_head"/>
</dbReference>
<dbReference type="PANTHER" id="PTHR21237">
    <property type="entry name" value="GRPE PROTEIN"/>
    <property type="match status" value="1"/>
</dbReference>
<dbReference type="PANTHER" id="PTHR21237:SF23">
    <property type="entry name" value="GRPE PROTEIN HOMOLOG, MITOCHONDRIAL"/>
    <property type="match status" value="1"/>
</dbReference>
<dbReference type="Pfam" id="PF01025">
    <property type="entry name" value="GrpE"/>
    <property type="match status" value="1"/>
</dbReference>
<dbReference type="PRINTS" id="PR00773">
    <property type="entry name" value="GRPEPROTEIN"/>
</dbReference>
<dbReference type="SUPFAM" id="SSF58014">
    <property type="entry name" value="Coiled-coil domain of nucleotide exchange factor GrpE"/>
    <property type="match status" value="1"/>
</dbReference>
<dbReference type="SUPFAM" id="SSF51064">
    <property type="entry name" value="Head domain of nucleotide exchange factor GrpE"/>
    <property type="match status" value="1"/>
</dbReference>
<dbReference type="PROSITE" id="PS01071">
    <property type="entry name" value="GRPE"/>
    <property type="match status" value="1"/>
</dbReference>
<organism>
    <name type="scientific">Methanothrix thermoacetophila (strain DSM 6194 / JCM 14653 / NBRC 101360 / PT)</name>
    <name type="common">Methanosaeta thermophila</name>
    <dbReference type="NCBI Taxonomy" id="349307"/>
    <lineage>
        <taxon>Archaea</taxon>
        <taxon>Methanobacteriati</taxon>
        <taxon>Methanobacteriota</taxon>
        <taxon>Stenosarchaea group</taxon>
        <taxon>Methanomicrobia</taxon>
        <taxon>Methanotrichales</taxon>
        <taxon>Methanotrichaceae</taxon>
        <taxon>Methanothrix</taxon>
    </lineage>
</organism>
<reference key="1">
    <citation type="submission" date="2006-10" db="EMBL/GenBank/DDBJ databases">
        <title>Complete sequence of Methanosaeta thermophila PT.</title>
        <authorList>
            <consortium name="US DOE Joint Genome Institute"/>
            <person name="Copeland A."/>
            <person name="Lucas S."/>
            <person name="Lapidus A."/>
            <person name="Barry K."/>
            <person name="Detter J.C."/>
            <person name="Glavina del Rio T."/>
            <person name="Hammon N."/>
            <person name="Israni S."/>
            <person name="Pitluck S."/>
            <person name="Chain P."/>
            <person name="Malfatti S."/>
            <person name="Shin M."/>
            <person name="Vergez L."/>
            <person name="Schmutz J."/>
            <person name="Larimer F."/>
            <person name="Land M."/>
            <person name="Hauser L."/>
            <person name="Kyrpides N."/>
            <person name="Kim E."/>
            <person name="Smith K.S."/>
            <person name="Ingram-Smith C."/>
            <person name="Richardson P."/>
        </authorList>
    </citation>
    <scope>NUCLEOTIDE SEQUENCE [LARGE SCALE GENOMIC DNA]</scope>
    <source>
        <strain>DSM 6194 / JCM 14653 / NBRC 101360 / PT</strain>
    </source>
</reference>